<proteinExistence type="evidence at protein level"/>
<reference key="1">
    <citation type="journal article" date="2003" name="DNA Res.">
        <title>Prediction of the coding sequences of mouse homologues of KIAA gene: III. The complete nucleotide sequences of 500 mouse KIAA-homologous cDNAs identified by screening of terminal sequences of cDNA clones randomly sampled from size-fractionated libraries.</title>
        <authorList>
            <person name="Okazaki N."/>
            <person name="Kikuno R."/>
            <person name="Ohara R."/>
            <person name="Inamoto S."/>
            <person name="Koseki H."/>
            <person name="Hiraoka S."/>
            <person name="Saga Y."/>
            <person name="Nagase T."/>
            <person name="Ohara O."/>
            <person name="Koga H."/>
        </authorList>
    </citation>
    <scope>NUCLEOTIDE SEQUENCE [LARGE SCALE MRNA]</scope>
    <source>
        <tissue>Embryonic tail</tissue>
    </source>
</reference>
<reference key="2">
    <citation type="journal article" date="2009" name="PLoS Biol.">
        <title>Lineage-specific biology revealed by a finished genome assembly of the mouse.</title>
        <authorList>
            <person name="Church D.M."/>
            <person name="Goodstadt L."/>
            <person name="Hillier L.W."/>
            <person name="Zody M.C."/>
            <person name="Goldstein S."/>
            <person name="She X."/>
            <person name="Bult C.J."/>
            <person name="Agarwala R."/>
            <person name="Cherry J.L."/>
            <person name="DiCuccio M."/>
            <person name="Hlavina W."/>
            <person name="Kapustin Y."/>
            <person name="Meric P."/>
            <person name="Maglott D."/>
            <person name="Birtle Z."/>
            <person name="Marques A.C."/>
            <person name="Graves T."/>
            <person name="Zhou S."/>
            <person name="Teague B."/>
            <person name="Potamousis K."/>
            <person name="Churas C."/>
            <person name="Place M."/>
            <person name="Herschleb J."/>
            <person name="Runnheim R."/>
            <person name="Forrest D."/>
            <person name="Amos-Landgraf J."/>
            <person name="Schwartz D.C."/>
            <person name="Cheng Z."/>
            <person name="Lindblad-Toh K."/>
            <person name="Eichler E.E."/>
            <person name="Ponting C.P."/>
        </authorList>
    </citation>
    <scope>NUCLEOTIDE SEQUENCE [LARGE SCALE GENOMIC DNA]</scope>
    <source>
        <strain>C57BL/6J</strain>
    </source>
</reference>
<reference key="3">
    <citation type="journal article" date="2004" name="Genome Res.">
        <title>The status, quality, and expansion of the NIH full-length cDNA project: the Mammalian Gene Collection (MGC).</title>
        <authorList>
            <consortium name="The MGC Project Team"/>
        </authorList>
    </citation>
    <scope>NUCLEOTIDE SEQUENCE [LARGE SCALE MRNA] OF 438-1822</scope>
    <source>
        <strain>C57BL/6J</strain>
        <tissue>Brain</tissue>
    </source>
</reference>
<reference key="4">
    <citation type="journal article" date="2009" name="Immunity">
        <title>The phagosomal proteome in interferon-gamma-activated macrophages.</title>
        <authorList>
            <person name="Trost M."/>
            <person name="English L."/>
            <person name="Lemieux S."/>
            <person name="Courcelles M."/>
            <person name="Desjardins M."/>
            <person name="Thibault P."/>
        </authorList>
    </citation>
    <scope>IDENTIFICATION BY MASS SPECTROMETRY [LARGE SCALE ANALYSIS]</scope>
</reference>
<reference key="5">
    <citation type="journal article" date="2009" name="Mol. Biol. Cell">
        <title>Interaction of CDK5RAP2 with EB1 to track growing microtubule tips and to regulate microtubule dynamics.</title>
        <authorList>
            <person name="Fong K.W."/>
            <person name="Hau S.Y."/>
            <person name="Kho Y.S."/>
            <person name="Jia Y."/>
            <person name="He L."/>
            <person name="Qi R.Z."/>
        </authorList>
    </citation>
    <scope>LACK OF INTERACTION WITH MAPRE1</scope>
    <scope>SUBCELLULAR LOCATION</scope>
</reference>
<reference key="6">
    <citation type="journal article" date="2010" name="Cell">
        <title>A tissue-specific atlas of mouse protein phosphorylation and expression.</title>
        <authorList>
            <person name="Huttlin E.L."/>
            <person name="Jedrychowski M.P."/>
            <person name="Elias J.E."/>
            <person name="Goswami T."/>
            <person name="Rad R."/>
            <person name="Beausoleil S.A."/>
            <person name="Villen J."/>
            <person name="Haas W."/>
            <person name="Sowa M.E."/>
            <person name="Gygi S.P."/>
        </authorList>
    </citation>
    <scope>PHOSPHORYLATION [LARGE SCALE ANALYSIS] AT SER-485; THR-1195; SER-1245 AND SER-1497</scope>
    <scope>IDENTIFICATION BY MASS SPECTROMETRY [LARGE SCALE ANALYSIS]</scope>
    <source>
        <tissue>Brown adipose tissue</tissue>
        <tissue>Kidney</tissue>
        <tissue>Liver</tissue>
        <tissue>Lung</tissue>
        <tissue>Spleen</tissue>
        <tissue>Testis</tissue>
    </source>
</reference>
<reference key="7">
    <citation type="journal article" date="2010" name="Dev. Cell">
        <title>CDK5RAP2 regulates centriole engagement and cohesion in mice.</title>
        <authorList>
            <person name="Barrera J.A."/>
            <person name="Kao L.R."/>
            <person name="Hammer R.E."/>
            <person name="Seemann J."/>
            <person name="Fuchs J.L."/>
            <person name="Megraw T.L."/>
        </authorList>
    </citation>
    <scope>FUNCTION</scope>
    <scope>SUBCELLULAR LOCATION</scope>
</reference>
<reference key="8">
    <citation type="journal article" date="2010" name="Development">
        <title>Cdk5rap2 regulates centrosome function and chromosome segregation in neuronal progenitors.</title>
        <authorList>
            <person name="Lizarraga S.B."/>
            <person name="Margossian S.P."/>
            <person name="Harris M.H."/>
            <person name="Campagna D.R."/>
            <person name="Han A.P."/>
            <person name="Blevins S."/>
            <person name="Mudbhary R."/>
            <person name="Barker J.E."/>
            <person name="Walsh C.A."/>
            <person name="Fleming M.D."/>
        </authorList>
    </citation>
    <scope>FUNCTION</scope>
    <scope>DEVELOPMENTAL STAGE</scope>
    <scope>TISSUE SPECIFICITY</scope>
</reference>
<reference key="9">
    <citation type="journal article" date="2010" name="J. Biol. Chem.">
        <title>Conserved motif of CDK5RAP2 mediates its localization to centrosomes and the Golgi complex.</title>
        <authorList>
            <person name="Wang Z."/>
            <person name="Wu T."/>
            <person name="Shi L."/>
            <person name="Zhang L."/>
            <person name="Zheng W."/>
            <person name="Qu J.Y."/>
            <person name="Niu R."/>
            <person name="Qi R.Z."/>
        </authorList>
    </citation>
    <scope>SUBCELLULAR LOCATION</scope>
</reference>
<reference key="10">
    <citation type="journal article" date="2010" name="Neuron">
        <title>Cdk5rap2 interacts with pericentrin to maintain the neural progenitor pool in the developing neocortex.</title>
        <authorList>
            <person name="Buchman J.J."/>
            <person name="Tseng H.C."/>
            <person name="Zhou Y."/>
            <person name="Frank C.L."/>
            <person name="Xie Z."/>
            <person name="Tsai L.H."/>
        </authorList>
    </citation>
    <scope>FUNCTION</scope>
    <scope>SUBCELLULAR LOCATION</scope>
    <scope>DEVELOPMENTAL STAGE</scope>
    <scope>INTERACTION WITH PCNT</scope>
</reference>
<evidence type="ECO:0000250" key="1"/>
<evidence type="ECO:0000250" key="2">
    <source>
        <dbReference type="UniProtKB" id="Q96SN8"/>
    </source>
</evidence>
<evidence type="ECO:0000250" key="3">
    <source>
        <dbReference type="UniProtKB" id="Q9JLH5"/>
    </source>
</evidence>
<evidence type="ECO:0000256" key="4">
    <source>
        <dbReference type="SAM" id="MobiDB-lite"/>
    </source>
</evidence>
<evidence type="ECO:0000269" key="5">
    <source>
    </source>
</evidence>
<evidence type="ECO:0000269" key="6">
    <source>
    </source>
</evidence>
<evidence type="ECO:0000269" key="7">
    <source>
    </source>
</evidence>
<evidence type="ECO:0000269" key="8">
    <source>
    </source>
</evidence>
<evidence type="ECO:0000269" key="9">
    <source>
    </source>
</evidence>
<evidence type="ECO:0000305" key="10"/>
<evidence type="ECO:0000305" key="11">
    <source>
    </source>
</evidence>
<evidence type="ECO:0007744" key="12">
    <source>
    </source>
</evidence>
<keyword id="KW-0112">Calmodulin-binding</keyword>
<keyword id="KW-0963">Cytoplasm</keyword>
<keyword id="KW-0206">Cytoskeleton</keyword>
<keyword id="KW-0333">Golgi apparatus</keyword>
<keyword id="KW-0597">Phosphoprotein</keyword>
<keyword id="KW-1185">Reference proteome</keyword>
<accession>Q8K389</accession>
<accession>A2AVA1</accession>
<accession>Q6PCN1</accession>
<accession>Q6ZPL0</accession>
<gene>
    <name type="primary">Cdk5rap2</name>
    <name type="synonym">Kiaa1633</name>
</gene>
<comment type="function">
    <text evidence="2 5 6 8 9">Potential regulator of CDK5 activity via its interaction with CDK5R1 (By similarity). Negative regulator of centriole disengagement (licensing) which maintains centriole engagement and cohesion (PubMed:20627074). Involved in regulation of mitotic spindle orientation (PubMed:20460369). Plays a role in the spindle checkpoint activation by acting as a transcriptional regulator of both BUBR1 and MAD2 promoter (By similarity). Together with EB1/MAPRE1, may promote microtubule polymerization, bundle formation, growth and dynamics at the plus ends (By similarity). Regulates centrosomal maturation by recruitment of the gamma-tubulin ring complex (gTuRC) onto centrosomes (By similarity). Required for the recruitment of AKAP9 to centrosomes (By similarity). Plays a role in neurogenesis (PubMed:20471352). Contrary to higher mammalian orthologs, including human, chimpanzee, bovine and dog, does not interact with EB1/MAPRE1, therefore its function in the regulation of microtubule dynamics is unclear (PubMed:19553473).</text>
</comment>
<comment type="subunit">
    <text evidence="2 3 5">Homodimer (By similarity). Interacts with CDK5R1 (p35 form) (By similarity). CDK5RAP1, CDK5RAP2 and CDK5RAP3 show competitive binding to CDK5R1 (By similarity). May form a complex with CDK5R1 and CDK5 (By similarity). Interacts with pericentrin/PCNT; the interaction is leading to centrosomal and Golgi localization of CDK5RAP2 and PCNT (By similarity). Interacts with AKAP9; the interaction targets CDK5RAP2 and AKAP9 to Golgi apparatus (By similarity). Interacts with TUBG1; the interaction is leading to the centrosomal localization of CDK5RAP2 and TUBG1 (By similarity). Interacts with TUBGCP3 (By similarity). Interacts with CALM1 (By similarity). Interacts with CDC20 (By similarity). Interacts with CEP68; degradation of CEP68 in early mitosis leads to removal of CDK5RAP2 from the centrosome which promotes centriole disengagement and subsequent centriole separation (By similarity). Interacts with NCKAP5L (By similarity). Interacts with LGALS3BP; this interaction may connect the pericentrosomal complex to the gamma-tubulin ring complex (gTuRC) to promote microtubule assembly and acetylation (By similarity). Contrary to human, chimpanzee, bovine and dog orthologous proteins, does not interact with EB1/MAPRE1, possibly due to a divergence at the level of the critical residue 939, which is a proline in MAPRE1-binding orthologs and a leucine in mouse and rat (PubMed:19553473). Interacts with CCDC66 (By similarity). Associates (via CM1 motif) with TUBGCP2 of the gTuRC; the interaction plays a role in gTuRC activation (By similarity).</text>
</comment>
<comment type="subcellular location">
    <subcellularLocation>
        <location evidence="7 8 9 11">Cytoplasm</location>
        <location evidence="7 8 9 11">Cytoskeleton</location>
        <location evidence="7 8 9 11">Microtubule organizing center</location>
        <location evidence="7 8 9 11">Centrosome</location>
    </subcellularLocation>
    <subcellularLocation>
        <location evidence="2">Golgi apparatus</location>
    </subcellularLocation>
    <subcellularLocation>
        <location evidence="2">Cytoplasm</location>
    </subcellularLocation>
    <text evidence="2 11">Found in the pericentriolar region adhering to the surface of the centrosome and in the region of the centrosomal appendages. Due to the lack of interaction with EB1/MAPRE1, its localization to microtubule plus ends may not be conserved in mice (Probable). Localization to centrosomes versus Golgi apparatus may be cell type-dependent (By similarity).</text>
</comment>
<comment type="tissue specificity">
    <text evidence="6">Expressed in testis, thymus, heart and brain.</text>
</comment>
<comment type="developmental stage">
    <text evidence="6 8">Detected in the developing cortex at 9.5 dpc. Expression peaks between 10.5 and 13.5 dpc, remains robust at 15.5 dpc and declines thereafter. This peak corresponds to periods of active neurogenesis.</text>
</comment>
<comment type="PTM">
    <text evidence="3">Phosphorylated in vitro by CDK5.</text>
</comment>
<comment type="sequence caution" evidence="10">
    <conflict type="erroneous initiation">
        <sequence resource="EMBL-CDS" id="BAC98221"/>
    </conflict>
    <text>Extended N-terminus.</text>
</comment>
<organism>
    <name type="scientific">Mus musculus</name>
    <name type="common">Mouse</name>
    <dbReference type="NCBI Taxonomy" id="10090"/>
    <lineage>
        <taxon>Eukaryota</taxon>
        <taxon>Metazoa</taxon>
        <taxon>Chordata</taxon>
        <taxon>Craniata</taxon>
        <taxon>Vertebrata</taxon>
        <taxon>Euteleostomi</taxon>
        <taxon>Mammalia</taxon>
        <taxon>Eutheria</taxon>
        <taxon>Euarchontoglires</taxon>
        <taxon>Glires</taxon>
        <taxon>Rodentia</taxon>
        <taxon>Myomorpha</taxon>
        <taxon>Muroidea</taxon>
        <taxon>Muridae</taxon>
        <taxon>Murinae</taxon>
        <taxon>Mus</taxon>
        <taxon>Mus</taxon>
    </lineage>
</organism>
<name>CK5P2_MOUSE</name>
<dbReference type="EMBL" id="AK129411">
    <property type="protein sequence ID" value="BAC98221.1"/>
    <property type="status" value="ALT_INIT"/>
    <property type="molecule type" value="mRNA"/>
</dbReference>
<dbReference type="EMBL" id="AL845502">
    <property type="status" value="NOT_ANNOTATED_CDS"/>
    <property type="molecule type" value="Genomic_DNA"/>
</dbReference>
<dbReference type="EMBL" id="AL929409">
    <property type="status" value="NOT_ANNOTATED_CDS"/>
    <property type="molecule type" value="Genomic_DNA"/>
</dbReference>
<dbReference type="EMBL" id="BC059253">
    <property type="protein sequence ID" value="AAH59253.1"/>
    <property type="molecule type" value="mRNA"/>
</dbReference>
<dbReference type="CCDS" id="CCDS38779.1"/>
<dbReference type="RefSeq" id="NP_666102.2">
    <property type="nucleotide sequence ID" value="NM_145990.4"/>
</dbReference>
<dbReference type="SMR" id="Q8K389"/>
<dbReference type="BioGRID" id="229527">
    <property type="interactions" value="33"/>
</dbReference>
<dbReference type="FunCoup" id="Q8K389">
    <property type="interactions" value="2227"/>
</dbReference>
<dbReference type="IntAct" id="Q8K389">
    <property type="interactions" value="21"/>
</dbReference>
<dbReference type="MINT" id="Q8K389"/>
<dbReference type="STRING" id="10090.ENSMUSP00000119891"/>
<dbReference type="iPTMnet" id="Q8K389"/>
<dbReference type="PhosphoSitePlus" id="Q8K389"/>
<dbReference type="jPOST" id="Q8K389"/>
<dbReference type="PaxDb" id="10090-ENSMUSP00000119891"/>
<dbReference type="ProteomicsDB" id="279089"/>
<dbReference type="Pumba" id="Q8K389"/>
<dbReference type="Antibodypedia" id="30055">
    <property type="antibodies" value="138 antibodies from 25 providers"/>
</dbReference>
<dbReference type="DNASU" id="214444"/>
<dbReference type="Ensembl" id="ENSMUST00000144099.8">
    <property type="protein sequence ID" value="ENSMUSP00000119891.2"/>
    <property type="gene ID" value="ENSMUSG00000039298.17"/>
</dbReference>
<dbReference type="GeneID" id="214444"/>
<dbReference type="KEGG" id="mmu:214444"/>
<dbReference type="UCSC" id="uc008thy.1">
    <property type="organism name" value="mouse"/>
</dbReference>
<dbReference type="AGR" id="MGI:2384875"/>
<dbReference type="CTD" id="55755"/>
<dbReference type="MGI" id="MGI:2384875">
    <property type="gene designation" value="Cdk5rap2"/>
</dbReference>
<dbReference type="VEuPathDB" id="HostDB:ENSMUSG00000039298"/>
<dbReference type="eggNOG" id="ENOG502QTI7">
    <property type="taxonomic scope" value="Eukaryota"/>
</dbReference>
<dbReference type="GeneTree" id="ENSGT00950000183190"/>
<dbReference type="HOGENOM" id="CLU_002129_0_0_1"/>
<dbReference type="InParanoid" id="Q8K389"/>
<dbReference type="OMA" id="CGQIGEM"/>
<dbReference type="OrthoDB" id="44797at9989"/>
<dbReference type="PhylomeDB" id="Q8K389"/>
<dbReference type="TreeFam" id="TF329233"/>
<dbReference type="Reactome" id="R-MMU-2565942">
    <property type="pathway name" value="Regulation of PLK1 Activity at G2/M Transition"/>
</dbReference>
<dbReference type="Reactome" id="R-MMU-380259">
    <property type="pathway name" value="Loss of Nlp from mitotic centrosomes"/>
</dbReference>
<dbReference type="Reactome" id="R-MMU-380270">
    <property type="pathway name" value="Recruitment of mitotic centrosome proteins and complexes"/>
</dbReference>
<dbReference type="Reactome" id="R-MMU-380284">
    <property type="pathway name" value="Loss of proteins required for interphase microtubule organization from the centrosome"/>
</dbReference>
<dbReference type="Reactome" id="R-MMU-380320">
    <property type="pathway name" value="Recruitment of NuMA to mitotic centrosomes"/>
</dbReference>
<dbReference type="Reactome" id="R-MMU-5620912">
    <property type="pathway name" value="Anchoring of the basal body to the plasma membrane"/>
</dbReference>
<dbReference type="Reactome" id="R-MMU-8854518">
    <property type="pathway name" value="AURKA Activation by TPX2"/>
</dbReference>
<dbReference type="BioGRID-ORCS" id="214444">
    <property type="hits" value="10 hits in 77 CRISPR screens"/>
</dbReference>
<dbReference type="CD-CODE" id="01CA17F3">
    <property type="entry name" value="Centrosome"/>
</dbReference>
<dbReference type="ChiTaRS" id="Cdk5rap2">
    <property type="organism name" value="mouse"/>
</dbReference>
<dbReference type="PRO" id="PR:Q8K389"/>
<dbReference type="Proteomes" id="UP000000589">
    <property type="component" value="Chromosome 4"/>
</dbReference>
<dbReference type="RNAct" id="Q8K389">
    <property type="molecule type" value="protein"/>
</dbReference>
<dbReference type="Bgee" id="ENSMUSG00000039298">
    <property type="expression patterns" value="Expressed in dorsal pancreas and 178 other cell types or tissues"/>
</dbReference>
<dbReference type="ExpressionAtlas" id="Q8K389">
    <property type="expression patterns" value="baseline and differential"/>
</dbReference>
<dbReference type="GO" id="GO:0030054">
    <property type="term" value="C:cell junction"/>
    <property type="evidence" value="ECO:0007669"/>
    <property type="project" value="Ensembl"/>
</dbReference>
<dbReference type="GO" id="GO:0005813">
    <property type="term" value="C:centrosome"/>
    <property type="evidence" value="ECO:0000314"/>
    <property type="project" value="UniProtKB"/>
</dbReference>
<dbReference type="GO" id="GO:0036064">
    <property type="term" value="C:ciliary basal body"/>
    <property type="evidence" value="ECO:0007669"/>
    <property type="project" value="Ensembl"/>
</dbReference>
<dbReference type="GO" id="GO:0005829">
    <property type="term" value="C:cytosol"/>
    <property type="evidence" value="ECO:0007669"/>
    <property type="project" value="Ensembl"/>
</dbReference>
<dbReference type="GO" id="GO:0000931">
    <property type="term" value="C:gamma-tubulin ring complex"/>
    <property type="evidence" value="ECO:0007669"/>
    <property type="project" value="Ensembl"/>
</dbReference>
<dbReference type="GO" id="GO:0005794">
    <property type="term" value="C:Golgi apparatus"/>
    <property type="evidence" value="ECO:0000250"/>
    <property type="project" value="UniProtKB"/>
</dbReference>
<dbReference type="GO" id="GO:0005874">
    <property type="term" value="C:microtubule"/>
    <property type="evidence" value="ECO:0000250"/>
    <property type="project" value="UniProtKB"/>
</dbReference>
<dbReference type="GO" id="GO:0035371">
    <property type="term" value="C:microtubule plus-end"/>
    <property type="evidence" value="ECO:0000250"/>
    <property type="project" value="UniProtKB"/>
</dbReference>
<dbReference type="GO" id="GO:0097431">
    <property type="term" value="C:mitotic spindle pole"/>
    <property type="evidence" value="ECO:0000314"/>
    <property type="project" value="MGI"/>
</dbReference>
<dbReference type="GO" id="GO:0000242">
    <property type="term" value="C:pericentriolar material"/>
    <property type="evidence" value="ECO:0000250"/>
    <property type="project" value="UniProtKB"/>
</dbReference>
<dbReference type="GO" id="GO:0048471">
    <property type="term" value="C:perinuclear region of cytoplasm"/>
    <property type="evidence" value="ECO:0000250"/>
    <property type="project" value="UniProtKB"/>
</dbReference>
<dbReference type="GO" id="GO:0000922">
    <property type="term" value="C:spindle pole"/>
    <property type="evidence" value="ECO:0000250"/>
    <property type="project" value="UniProtKB"/>
</dbReference>
<dbReference type="GO" id="GO:0005516">
    <property type="term" value="F:calmodulin binding"/>
    <property type="evidence" value="ECO:0000250"/>
    <property type="project" value="UniProtKB"/>
</dbReference>
<dbReference type="GO" id="GO:0043015">
    <property type="term" value="F:gamma-tubulin binding"/>
    <property type="evidence" value="ECO:0007669"/>
    <property type="project" value="Ensembl"/>
</dbReference>
<dbReference type="GO" id="GO:0008017">
    <property type="term" value="F:microtubule binding"/>
    <property type="evidence" value="ECO:0007669"/>
    <property type="project" value="Ensembl"/>
</dbReference>
<dbReference type="GO" id="GO:0019901">
    <property type="term" value="F:protein kinase binding"/>
    <property type="evidence" value="ECO:0000250"/>
    <property type="project" value="UniProtKB"/>
</dbReference>
<dbReference type="GO" id="GO:0044877">
    <property type="term" value="F:protein-containing complex binding"/>
    <property type="evidence" value="ECO:0007669"/>
    <property type="project" value="Ensembl"/>
</dbReference>
<dbReference type="GO" id="GO:0000976">
    <property type="term" value="F:transcription cis-regulatory region binding"/>
    <property type="evidence" value="ECO:0000250"/>
    <property type="project" value="UniProtKB"/>
</dbReference>
<dbReference type="GO" id="GO:0007420">
    <property type="term" value="P:brain development"/>
    <property type="evidence" value="ECO:0000315"/>
    <property type="project" value="UniProtKB"/>
</dbReference>
<dbReference type="GO" id="GO:0007099">
    <property type="term" value="P:centriole replication"/>
    <property type="evidence" value="ECO:0007669"/>
    <property type="project" value="Ensembl"/>
</dbReference>
<dbReference type="GO" id="GO:0007098">
    <property type="term" value="P:centrosome cycle"/>
    <property type="evidence" value="ECO:0000250"/>
    <property type="project" value="UniProtKB"/>
</dbReference>
<dbReference type="GO" id="GO:0007059">
    <property type="term" value="P:chromosome segregation"/>
    <property type="evidence" value="ECO:0000250"/>
    <property type="project" value="UniProtKB"/>
</dbReference>
<dbReference type="GO" id="GO:0000132">
    <property type="term" value="P:establishment of mitotic spindle orientation"/>
    <property type="evidence" value="ECO:0000315"/>
    <property type="project" value="UniProtKB"/>
</dbReference>
<dbReference type="GO" id="GO:0001578">
    <property type="term" value="P:microtubule bundle formation"/>
    <property type="evidence" value="ECO:0000250"/>
    <property type="project" value="UniProtKB"/>
</dbReference>
<dbReference type="GO" id="GO:0031023">
    <property type="term" value="P:microtubule organizing center organization"/>
    <property type="evidence" value="ECO:0000250"/>
    <property type="project" value="UniProtKB"/>
</dbReference>
<dbReference type="GO" id="GO:0046600">
    <property type="term" value="P:negative regulation of centriole replication"/>
    <property type="evidence" value="ECO:0000315"/>
    <property type="project" value="UniProtKB"/>
</dbReference>
<dbReference type="GO" id="GO:0045665">
    <property type="term" value="P:negative regulation of neuron differentiation"/>
    <property type="evidence" value="ECO:0000315"/>
    <property type="project" value="UniProtKB"/>
</dbReference>
<dbReference type="GO" id="GO:0022008">
    <property type="term" value="P:neurogenesis"/>
    <property type="evidence" value="ECO:0000315"/>
    <property type="project" value="UniProtKB"/>
</dbReference>
<dbReference type="GO" id="GO:0045893">
    <property type="term" value="P:positive regulation of DNA-templated transcription"/>
    <property type="evidence" value="ECO:0000250"/>
    <property type="project" value="UniProtKB"/>
</dbReference>
<dbReference type="GO" id="GO:0031116">
    <property type="term" value="P:positive regulation of microtubule polymerization"/>
    <property type="evidence" value="ECO:0007669"/>
    <property type="project" value="Ensembl"/>
</dbReference>
<dbReference type="GO" id="GO:0090266">
    <property type="term" value="P:regulation of mitotic cell cycle spindle assembly checkpoint"/>
    <property type="evidence" value="ECO:0000250"/>
    <property type="project" value="UniProtKB"/>
</dbReference>
<dbReference type="InterPro" id="IPR056273">
    <property type="entry name" value="CC_CDK5RAP2_MYOME"/>
</dbReference>
<dbReference type="InterPro" id="IPR042791">
    <property type="entry name" value="CDK5RAP2"/>
</dbReference>
<dbReference type="InterPro" id="IPR012943">
    <property type="entry name" value="Cnn_1N"/>
</dbReference>
<dbReference type="PANTHER" id="PTHR46930">
    <property type="entry name" value="CDK5 REGULATORY SUBUNIT-ASSOCIATED PROTEIN 2"/>
    <property type="match status" value="1"/>
</dbReference>
<dbReference type="PANTHER" id="PTHR46930:SF1">
    <property type="entry name" value="CDK5 REGULATORY SUBUNIT-ASSOCIATED PROTEIN 2"/>
    <property type="match status" value="1"/>
</dbReference>
<dbReference type="Pfam" id="PF23246">
    <property type="entry name" value="CC_CDK5RAP2"/>
    <property type="match status" value="1"/>
</dbReference>
<dbReference type="Pfam" id="PF07989">
    <property type="entry name" value="Cnn_1N"/>
    <property type="match status" value="1"/>
</dbReference>
<feature type="chain" id="PRO_0000089837" description="CDK5 regulatory subunit-associated protein 2">
    <location>
        <begin position="1"/>
        <end position="1822"/>
    </location>
</feature>
<feature type="region of interest" description="CM1 motif; interacts with the gTuRC" evidence="2">
    <location>
        <begin position="50"/>
        <end position="93"/>
    </location>
</feature>
<feature type="region of interest" description="Interaction with NCKAP5L" evidence="2">
    <location>
        <begin position="57"/>
        <end position="195"/>
    </location>
</feature>
<feature type="region of interest" description="Disordered" evidence="4">
    <location>
        <begin position="1022"/>
        <end position="1046"/>
    </location>
</feature>
<feature type="region of interest" description="Interaction with PCNT and AKAP9" evidence="8">
    <location>
        <begin position="1201"/>
        <end position="1822"/>
    </location>
</feature>
<feature type="region of interest" description="Disordered" evidence="4">
    <location>
        <begin position="1350"/>
        <end position="1391"/>
    </location>
</feature>
<feature type="region of interest" description="Required for centrosomal attachment, Golgi targeting and CALM1 interaction" evidence="1">
    <location>
        <begin position="1655"/>
        <end position="1822"/>
    </location>
</feature>
<feature type="region of interest" description="Interaction with CDK5R1" evidence="1">
    <location>
        <begin position="1655"/>
        <end position="1697"/>
    </location>
</feature>
<feature type="region of interest" description="Interaction with PCNT" evidence="8">
    <location>
        <begin position="1688"/>
        <end position="1822"/>
    </location>
</feature>
<feature type="region of interest" description="Required for centrosomal attachment, Golgi localization and CALM1 interaction" evidence="1">
    <location>
        <begin position="1790"/>
        <end position="1799"/>
    </location>
</feature>
<feature type="compositionally biased region" description="Basic and acidic residues" evidence="4">
    <location>
        <begin position="1372"/>
        <end position="1389"/>
    </location>
</feature>
<feature type="modified residue" description="Phosphoserine" evidence="12">
    <location>
        <position position="485"/>
    </location>
</feature>
<feature type="modified residue" description="Phosphoserine" evidence="2">
    <location>
        <position position="544"/>
    </location>
</feature>
<feature type="modified residue" description="Phosphothreonine" evidence="12">
    <location>
        <position position="1195"/>
    </location>
</feature>
<feature type="modified residue" description="Phosphoserine" evidence="2">
    <location>
        <position position="1243"/>
    </location>
</feature>
<feature type="modified residue" description="Phosphoserine" evidence="12">
    <location>
        <position position="1245"/>
    </location>
</feature>
<feature type="modified residue" description="Phosphoserine" evidence="12">
    <location>
        <position position="1497"/>
    </location>
</feature>
<feature type="modified residue" description="Phosphoserine" evidence="3">
    <location>
        <position position="1592"/>
    </location>
</feature>
<feature type="modified residue" description="Phosphoserine" evidence="3">
    <location>
        <position position="1595"/>
    </location>
</feature>
<feature type="modified residue" description="Phosphoserine" evidence="2">
    <location>
        <position position="1822"/>
    </location>
</feature>
<protein>
    <recommendedName>
        <fullName>CDK5 regulatory subunit-associated protein 2</fullName>
    </recommendedName>
    <alternativeName>
        <fullName>CDK5 activator-binding protein C48</fullName>
    </alternativeName>
</protein>
<sequence>MDSGMEEEGALPGTLSGCSGLHPVLPSDLDVISDTSGLGNGVLPSMSEEKVSPTRARNMKDFENQITELKKENFNLKLRIYFLEERIQQEFAGPTEHIYKTNIELKVEVESLKRELQEKDQLLVKASKAVESLAERGGSEVQRVKEDARKKVQQVEDLLTKRIHLLEEDVKAAQAELEKAFAGTETEKALRLSLESKLSAMKKMQEGDLEMTLALEEKDRLIEELKLSLKSKEALIQCLKEEKSQMASPDENVSSGELRGLSATLREEKERDAEEWQKERNHFEERIQALQEDLREKEREIATEKKNNLKSYKAIQGLTMALKSKEREVEELDSKIKEVTTDSTKGREDPLKTQIPRFQLREGSEDCEAALVEKEALLAKLHSENVTKSTENHRLLRNVKKVTQELNDLKKEKLRLEQALEEAHQEGNRGARTIHDLRNEVEKLRKEVSEREKAVEKHYKSLPGESKTKFHTQEQVVRSLTGSGSQEDLLLQKSNEKDLEAIQQNCYLMTAEELKFGSDGLITEKCSQQSPDSKLIFSKEKQQSEYEGLTGDLKAEQNIYAHLAKTQDTDSVSNLQAELKEVLALRKQLEQDVLAYRNLQKALQEQLSEIRSREEEPFSFYSDQTSYLSICLEEHNQFQLEHFSQEELKKKVSDLIQLVKDLHTDNQHLKKTIFDLSSVGFQGSDRLELTKQEELVASKEDEDTLKFEADVETPFQSDQHLEQSREIMEDYAEGGCKSGYGRHMDSNILGHDGAQTPGASEEHTLEDELLGLLATLFSKKATPLLESRPDLLKALGALLLERICLAEQGRPGDHLDSKTEKALQQVAVQLRDELGHSFPANSFSKSYNEVKSMWGNWLVKTGDEDTVELKSVSVQTMAIEDTPHGFKPQSKRDAWAEKQEEAIFSTELESEALGEMPGQQATHLSFPSAINPDAEKTGLLIQLKTPELLENLYNLPASPEVVVAQLQGQVLELQRELKEFKTRNKQLHEKLILAEAMMEGLPVPNSALVNVPAAQAVVRTAFQDNPGEQEGPETTQSAGRDKDMDSDQYTSFEIDSEICPPDDLALLPACKENLEDLLGPSSIATYLDSKSQLSVKVSVNGTDQSENINIPDDTEDLKQKIHDLQTELEGYRNIIVQLLKHSQCSEAIITVLCGTEGAQDGLNKPKGHIDEEEMTFSSLHQVRYVKHMKILRPLTPEMIDGKMLESLKQQLVDQEQELQKEQDLNLELFGEIHDLQNKFQDLSPSRYDSLVQSQARELSLQRQQIKDSHGICVIYRQHMSTMIKAFEELLQASDVDSCVAEGFREQLTQCAGLLEQLERLFLHGKSARVEPHPQNELLKGLRTVEGNLPYHHLLPESPEPSASHALSDDEMSEKSFLSRDPKPDSDTEKYPAMASHFPQDLLMEHIQEIRTLRKHLEESIKTNEKLRKQLERQGSETDQGSRNVSACGLALHSSLTSEIHFLRKQNEALSMMLEKGSKDKQKESEKLRESLARKAESLEQLQLEYTSVREENERLQRDIIEKERHNQELTEEVCSSRQELSRVQEEAKSRQQLLSQKDKLLQSLQMELKVYEKLAEEHPRLQQDGSKCPEASDNSFDLFESTQAMAPKSASETPLLSGTDVDSLSCDSTSSATSPTSMPCLVAGHHMWASKSGHHMLGLIEDYDALYKQISWGQTLLAKMDVQTQEALSPTSHKLGPKGSSSVPLSKFLSSMNTAKLVLEKASRLLKLFWRVSVPTNGQCSLHCEQIGEMKAENTKLHKKLFEQEKKLQNTAKLLQQSKHQEKVIFDQLVITHQVLRKARGNLELRPGATRPGASSPSRPGS</sequence>